<keyword id="KW-0002">3D-structure</keyword>
<keyword id="KW-0903">Direct protein sequencing</keyword>
<keyword id="KW-0456">Lyase</keyword>
<keyword id="KW-0663">Pyridoxal phosphate</keyword>
<keyword id="KW-1185">Reference proteome</keyword>
<proteinExistence type="evidence at protein level"/>
<accession>P00926</accession>
<accession>P78303</accession>
<dbReference type="EC" id="4.3.1.18"/>
<dbReference type="EMBL" id="J01603">
    <property type="protein sequence ID" value="AAA87975.1"/>
    <property type="molecule type" value="Genomic_DNA"/>
</dbReference>
<dbReference type="EMBL" id="U00096">
    <property type="protein sequence ID" value="AAC75425.1"/>
    <property type="molecule type" value="Genomic_DNA"/>
</dbReference>
<dbReference type="EMBL" id="AP009048">
    <property type="protein sequence ID" value="BAA16229.1"/>
    <property type="molecule type" value="Genomic_DNA"/>
</dbReference>
<dbReference type="EMBL" id="X86379">
    <property type="protein sequence ID" value="CAA60139.1"/>
    <property type="molecule type" value="Genomic_DNA"/>
</dbReference>
<dbReference type="PIR" id="C65010">
    <property type="entry name" value="DWECS"/>
</dbReference>
<dbReference type="RefSeq" id="NP_416867.1">
    <property type="nucleotide sequence ID" value="NC_000913.3"/>
</dbReference>
<dbReference type="RefSeq" id="WP_000426427.1">
    <property type="nucleotide sequence ID" value="NZ_STEB01000008.1"/>
</dbReference>
<dbReference type="PDB" id="3SS7">
    <property type="method" value="X-ray"/>
    <property type="resolution" value="1.55 A"/>
    <property type="chains" value="X=1-442"/>
</dbReference>
<dbReference type="PDB" id="3SS9">
    <property type="method" value="X-ray"/>
    <property type="resolution" value="1.97 A"/>
    <property type="chains" value="X=1-442"/>
</dbReference>
<dbReference type="PDBsum" id="3SS7"/>
<dbReference type="PDBsum" id="3SS9"/>
<dbReference type="SMR" id="P00926"/>
<dbReference type="BioGRID" id="4260555">
    <property type="interactions" value="13"/>
</dbReference>
<dbReference type="BioGRID" id="851178">
    <property type="interactions" value="1"/>
</dbReference>
<dbReference type="FunCoup" id="P00926">
    <property type="interactions" value="75"/>
</dbReference>
<dbReference type="IntAct" id="P00926">
    <property type="interactions" value="4"/>
</dbReference>
<dbReference type="STRING" id="511145.b2366"/>
<dbReference type="jPOST" id="P00926"/>
<dbReference type="PaxDb" id="511145-b2366"/>
<dbReference type="EnsemblBacteria" id="AAC75425">
    <property type="protein sequence ID" value="AAC75425"/>
    <property type="gene ID" value="b2366"/>
</dbReference>
<dbReference type="GeneID" id="946837"/>
<dbReference type="KEGG" id="ecj:JW2363"/>
<dbReference type="KEGG" id="eco:b2366"/>
<dbReference type="KEGG" id="ecoc:C3026_13160"/>
<dbReference type="PATRIC" id="fig|1411691.4.peg.4363"/>
<dbReference type="EchoBASE" id="EB0245"/>
<dbReference type="eggNOG" id="COG3048">
    <property type="taxonomic scope" value="Bacteria"/>
</dbReference>
<dbReference type="HOGENOM" id="CLU_035707_0_0_6"/>
<dbReference type="InParanoid" id="P00926"/>
<dbReference type="OMA" id="ESDPNCF"/>
<dbReference type="OrthoDB" id="9780546at2"/>
<dbReference type="PhylomeDB" id="P00926"/>
<dbReference type="BioCyc" id="EcoCyc:DSERDEAM-MONOMER"/>
<dbReference type="BioCyc" id="MetaCyc:DSERDEAM-MONOMER"/>
<dbReference type="BRENDA" id="4.3.1.18">
    <property type="organism ID" value="2026"/>
</dbReference>
<dbReference type="EvolutionaryTrace" id="P00926"/>
<dbReference type="PRO" id="PR:P00926"/>
<dbReference type="Proteomes" id="UP000000625">
    <property type="component" value="Chromosome"/>
</dbReference>
<dbReference type="GO" id="GO:0005737">
    <property type="term" value="C:cytoplasm"/>
    <property type="evidence" value="ECO:0000314"/>
    <property type="project" value="EcoliWiki"/>
</dbReference>
<dbReference type="GO" id="GO:0005829">
    <property type="term" value="C:cytosol"/>
    <property type="evidence" value="ECO:0000314"/>
    <property type="project" value="EcoCyc"/>
</dbReference>
<dbReference type="GO" id="GO:0008721">
    <property type="term" value="F:D-serine ammonia-lyase activity"/>
    <property type="evidence" value="ECO:0000314"/>
    <property type="project" value="CACAO"/>
</dbReference>
<dbReference type="GO" id="GO:0016836">
    <property type="term" value="F:hydro-lyase activity"/>
    <property type="evidence" value="ECO:0000314"/>
    <property type="project" value="EcoliWiki"/>
</dbReference>
<dbReference type="GO" id="GO:0030170">
    <property type="term" value="F:pyridoxal phosphate binding"/>
    <property type="evidence" value="ECO:0000314"/>
    <property type="project" value="EcoCyc"/>
</dbReference>
<dbReference type="GO" id="GO:0036088">
    <property type="term" value="P:D-serine catabolic process"/>
    <property type="evidence" value="ECO:0000314"/>
    <property type="project" value="EcoCyc"/>
</dbReference>
<dbReference type="GO" id="GO:0070178">
    <property type="term" value="P:D-serine metabolic process"/>
    <property type="evidence" value="ECO:0000314"/>
    <property type="project" value="EcoliWiki"/>
</dbReference>
<dbReference type="GO" id="GO:0051410">
    <property type="term" value="P:detoxification of nitrogen compound"/>
    <property type="evidence" value="ECO:0000315"/>
    <property type="project" value="EcoCyc"/>
</dbReference>
<dbReference type="GO" id="GO:0006974">
    <property type="term" value="P:DNA damage response"/>
    <property type="evidence" value="ECO:0000270"/>
    <property type="project" value="EcoliWiki"/>
</dbReference>
<dbReference type="CDD" id="cd06447">
    <property type="entry name" value="D-Ser-dehyd"/>
    <property type="match status" value="1"/>
</dbReference>
<dbReference type="FunFam" id="3.40.50.1100:FF:000018">
    <property type="entry name" value="D-serine dehydratase"/>
    <property type="match status" value="1"/>
</dbReference>
<dbReference type="Gene3D" id="3.40.50.1100">
    <property type="match status" value="2"/>
</dbReference>
<dbReference type="HAMAP" id="MF_01030">
    <property type="entry name" value="D_Ser_dehydrat"/>
    <property type="match status" value="1"/>
</dbReference>
<dbReference type="InterPro" id="IPR011780">
    <property type="entry name" value="D_Ser_am_lyase"/>
</dbReference>
<dbReference type="InterPro" id="IPR050147">
    <property type="entry name" value="Ser/Thr_Dehydratase"/>
</dbReference>
<dbReference type="InterPro" id="IPR000634">
    <property type="entry name" value="Ser/Thr_deHydtase_PyrdxlP-BS"/>
</dbReference>
<dbReference type="InterPro" id="IPR001926">
    <property type="entry name" value="TrpB-like_PALP"/>
</dbReference>
<dbReference type="InterPro" id="IPR036052">
    <property type="entry name" value="TrpB-like_PALP_sf"/>
</dbReference>
<dbReference type="NCBIfam" id="TIGR02035">
    <property type="entry name" value="D_Ser_am_lyase"/>
    <property type="match status" value="1"/>
</dbReference>
<dbReference type="NCBIfam" id="NF002823">
    <property type="entry name" value="PRK02991.1"/>
    <property type="match status" value="1"/>
</dbReference>
<dbReference type="PANTHER" id="PTHR48078:SF9">
    <property type="entry name" value="D-SERINE DEHYDRATASE"/>
    <property type="match status" value="1"/>
</dbReference>
<dbReference type="PANTHER" id="PTHR48078">
    <property type="entry name" value="THREONINE DEHYDRATASE, MITOCHONDRIAL-RELATED"/>
    <property type="match status" value="1"/>
</dbReference>
<dbReference type="Pfam" id="PF00291">
    <property type="entry name" value="PALP"/>
    <property type="match status" value="1"/>
</dbReference>
<dbReference type="SUPFAM" id="SSF53686">
    <property type="entry name" value="Tryptophan synthase beta subunit-like PLP-dependent enzymes"/>
    <property type="match status" value="1"/>
</dbReference>
<dbReference type="PROSITE" id="PS00165">
    <property type="entry name" value="DEHYDRATASE_SER_THR"/>
    <property type="match status" value="1"/>
</dbReference>
<name>SDHD_ECOLI</name>
<reference key="1">
    <citation type="journal article" date="1988" name="J. Biol. Chem.">
        <title>D-serine dehydratase from Escherichia coli. DNA sequence and identification of catalytically inactive glycine to aspartic acid variants.</title>
        <authorList>
            <person name="Marceau M."/>
            <person name="McFall E."/>
            <person name="Lewis S.D."/>
            <person name="Shafer J.A."/>
        </authorList>
    </citation>
    <scope>NUCLEOTIDE SEQUENCE [GENOMIC DNA]</scope>
</reference>
<reference key="2">
    <citation type="journal article" date="1997" name="DNA Res.">
        <title>Construction of a contiguous 874-kb sequence of the Escherichia coli-K12 genome corresponding to 50.0-68.8 min on the linkage map and analysis of its sequence features.</title>
        <authorList>
            <person name="Yamamoto Y."/>
            <person name="Aiba H."/>
            <person name="Baba T."/>
            <person name="Hayashi K."/>
            <person name="Inada T."/>
            <person name="Isono K."/>
            <person name="Itoh T."/>
            <person name="Kimura S."/>
            <person name="Kitagawa M."/>
            <person name="Makino K."/>
            <person name="Miki T."/>
            <person name="Mitsuhashi N."/>
            <person name="Mizobuchi K."/>
            <person name="Mori H."/>
            <person name="Nakade S."/>
            <person name="Nakamura Y."/>
            <person name="Nashimoto H."/>
            <person name="Oshima T."/>
            <person name="Oyama S."/>
            <person name="Saito N."/>
            <person name="Sampei G."/>
            <person name="Satoh Y."/>
            <person name="Sivasundaram S."/>
            <person name="Tagami H."/>
            <person name="Takahashi H."/>
            <person name="Takeda J."/>
            <person name="Takemoto K."/>
            <person name="Uehara K."/>
            <person name="Wada C."/>
            <person name="Yamagata S."/>
            <person name="Horiuchi T."/>
        </authorList>
    </citation>
    <scope>NUCLEOTIDE SEQUENCE [LARGE SCALE GENOMIC DNA]</scope>
    <source>
        <strain>K12 / W3110 / ATCC 27325 / DSM 5911</strain>
    </source>
</reference>
<reference key="3">
    <citation type="journal article" date="1997" name="Science">
        <title>The complete genome sequence of Escherichia coli K-12.</title>
        <authorList>
            <person name="Blattner F.R."/>
            <person name="Plunkett G. III"/>
            <person name="Bloch C.A."/>
            <person name="Perna N.T."/>
            <person name="Burland V."/>
            <person name="Riley M."/>
            <person name="Collado-Vides J."/>
            <person name="Glasner J.D."/>
            <person name="Rode C.K."/>
            <person name="Mayhew G.F."/>
            <person name="Gregor J."/>
            <person name="Davis N.W."/>
            <person name="Kirkpatrick H.A."/>
            <person name="Goeden M.A."/>
            <person name="Rose D.J."/>
            <person name="Mau B."/>
            <person name="Shao Y."/>
        </authorList>
    </citation>
    <scope>NUCLEOTIDE SEQUENCE [LARGE SCALE GENOMIC DNA]</scope>
    <source>
        <strain>K12 / MG1655 / ATCC 47076</strain>
    </source>
</reference>
<reference key="4">
    <citation type="journal article" date="2006" name="Mol. Syst. Biol.">
        <title>Highly accurate genome sequences of Escherichia coli K-12 strains MG1655 and W3110.</title>
        <authorList>
            <person name="Hayashi K."/>
            <person name="Morooka N."/>
            <person name="Yamamoto Y."/>
            <person name="Fujita K."/>
            <person name="Isono K."/>
            <person name="Choi S."/>
            <person name="Ohtsubo E."/>
            <person name="Baba T."/>
            <person name="Wanner B.L."/>
            <person name="Mori H."/>
            <person name="Horiuchi T."/>
        </authorList>
    </citation>
    <scope>NUCLEOTIDE SEQUENCE [LARGE SCALE GENOMIC DNA]</scope>
    <source>
        <strain>K12 / W3110 / ATCC 27325 / DSM 5911</strain>
    </source>
</reference>
<reference key="5">
    <citation type="journal article" date="1981" name="FEBS Lett.">
        <title>Sequence of Escherichia coli D-serine dehydratase. Location of the pyridoxal-phosphate binding site.</title>
        <authorList>
            <person name="Schiltz E."/>
            <person name="Schmitt W."/>
        </authorList>
    </citation>
    <scope>PROTEIN SEQUENCE</scope>
    <source>
        <strain>K12 / mutant C6</strain>
    </source>
</reference>
<reference key="6">
    <citation type="journal article" date="1983" name="J. Bacteriol.">
        <title>DNA sequences of the D-serine deaminase control region and N-terminal portion of the structural gene.</title>
        <authorList>
            <person name="McFall E."/>
            <person name="Runkel L."/>
        </authorList>
    </citation>
    <scope>NUCLEOTIDE SEQUENCE [GENOMIC DNA] OF 1-195</scope>
</reference>
<reference key="7">
    <citation type="journal article" date="1976" name="Eur. J. Biochem.">
        <title>Sequence studies on D-serine dehydratase of Escherichia coli. Primary structure of the tryptic phosphopyridoxyl peptide and of the N-terminus.</title>
        <authorList>
            <person name="Schiltz E."/>
            <person name="Schnackerz K.D."/>
        </authorList>
    </citation>
    <scope>PROTEIN SEQUENCE OF 1-23 AND 107-120</scope>
</reference>
<reference key="8">
    <citation type="submission" date="1995-04" db="EMBL/GenBank/DDBJ databases">
        <authorList>
            <person name="Brannigan J.A."/>
        </authorList>
    </citation>
    <scope>NUCLEOTIDE SEQUENCE [GENOMIC DNA] OF 1-10</scope>
    <source>
        <strain>K12</strain>
    </source>
</reference>
<reference key="9">
    <citation type="journal article" date="1995" name="J. Bacteriol.">
        <title>Organization and transcriptional regulation of the Escherichia coli K-12 D-serine tolerance locus.</title>
        <authorList>
            <person name="Noerregaard-Madsen M."/>
            <person name="McFall E."/>
            <person name="Valentin-Hansen P."/>
        </authorList>
    </citation>
    <scope>INDUCTION BY D-SERINE</scope>
    <source>
        <strain>K12</strain>
    </source>
</reference>
<reference evidence="4 5" key="10">
    <citation type="journal article" date="2012" name="Biochim. Biophys. Acta">
        <title>Crystal structure of D-serine dehydratase from Escherichia coli.</title>
        <authorList>
            <person name="Urusova D.V."/>
            <person name="Isupov M.N."/>
            <person name="Antonyuk S."/>
            <person name="Kachalova G.S."/>
            <person name="Obmolova G."/>
            <person name="Vagin A.A."/>
            <person name="Lebedev A.A."/>
            <person name="Burenkov G.P."/>
            <person name="Dauter Z."/>
            <person name="Bartunik H.D."/>
            <person name="Lamzin V.S."/>
            <person name="Melik-Adamyan W.R."/>
            <person name="Mueller T.D."/>
            <person name="Schnackerz K.D."/>
        </authorList>
    </citation>
    <scope>X-RAY CRYSTALLOGRAPHY (1.55 ANGSTROMS) IN COMPLEX WITH PYRIDOXAL PHOSPHATE IN OPEN AND CLOSED CONFORMATION</scope>
    <scope>COFACTOR</scope>
    <scope>SUBUNIT</scope>
    <scope>DOMAIN</scope>
</reference>
<gene>
    <name type="primary">dsdA</name>
    <name type="ordered locus">b2366</name>
    <name type="ordered locus">JW2363</name>
</gene>
<sequence>MENAKMNSLIAQYPLVKDLVALKETTWFNPGTTSLAEGLPYVGLTEQDVQDAHARLSRFAPYLAKAFPETAATGGIIESELVAIPAMQKRLEKEYQQPISGQLLLKKDSHLPISGSIKARGGIYEVLAHAEKLALEAGLLTLDDDYSKLLSPEFKQFFSQYSIAVGSTGNLGLSIGIMSARIGFKVTVHMSADARAWKKAKLRSHGVTVVEYEQDYGVAVEEGRKAAQSDPNCFFIDDENSRTLFLGYSVAGQRLKAQFAQQGRIVDADNPLFVYLPCGVGGGPGGVAFGLKLAFGDHVHCFFAEPTHSPCMLLGVHTGLHDQISVQDIGIDNLTAADGLAVGRASGFVGRAMERLLDGFYTLSDQTMYDMLGWLAQEEGIRLEPSALAGMAGPQRVCASVSYQQMHGFSAEQLRNTTHLVWATGGGMVPEEEMNQYLAKGR</sequence>
<comment type="catalytic activity">
    <reaction>
        <text>D-serine = pyruvate + NH4(+)</text>
        <dbReference type="Rhea" id="RHEA:13977"/>
        <dbReference type="ChEBI" id="CHEBI:15361"/>
        <dbReference type="ChEBI" id="CHEBI:28938"/>
        <dbReference type="ChEBI" id="CHEBI:35247"/>
        <dbReference type="EC" id="4.3.1.18"/>
    </reaction>
</comment>
<comment type="cofactor">
    <cofactor evidence="1">
        <name>pyridoxal 5'-phosphate</name>
        <dbReference type="ChEBI" id="CHEBI:597326"/>
    </cofactor>
</comment>
<comment type="subunit">
    <text evidence="1">Monomer.</text>
</comment>
<comment type="induction">
    <text evidence="2">By growth in D-serine.</text>
</comment>
<comment type="domain">
    <text evidence="1">Crystal structures show a large (N-terminal) and small (C-terminal) domain; the C-terminal domain is mobile and can block access to the active site.</text>
</comment>
<comment type="similarity">
    <text evidence="3">Belongs to the serine/threonine dehydratase family. DsdA subfamily.</text>
</comment>
<feature type="chain" id="PRO_0000185611" description="D-serine dehydratase">
    <location>
        <begin position="1"/>
        <end position="442"/>
    </location>
</feature>
<feature type="modified residue" description="N6-(pyridoxal phosphate)lysine" evidence="1 4 5">
    <location>
        <position position="118"/>
    </location>
</feature>
<feature type="sequence conflict" description="In Ref. 5; AA sequence." evidence="3" ref="5">
    <original>S</original>
    <variation>T</variation>
    <location>
        <position position="34"/>
    </location>
</feature>
<feature type="sequence conflict" description="In Ref. 1; AAA87975." evidence="3" ref="1">
    <original>P</original>
    <variation>R</variation>
    <location>
        <position position="85"/>
    </location>
</feature>
<feature type="sequence conflict" description="In Ref. 1; AAA87975." evidence="3" ref="1">
    <original>S</original>
    <variation>T</variation>
    <location>
        <position position="204"/>
    </location>
</feature>
<feature type="helix" evidence="6">
    <location>
        <begin position="7"/>
        <end position="12"/>
    </location>
</feature>
<feature type="helix" evidence="6">
    <location>
        <begin position="15"/>
        <end position="20"/>
    </location>
</feature>
<feature type="strand" evidence="6">
    <location>
        <begin position="26"/>
        <end position="28"/>
    </location>
</feature>
<feature type="helix" evidence="6">
    <location>
        <begin position="35"/>
        <end position="38"/>
    </location>
</feature>
<feature type="helix" evidence="6">
    <location>
        <begin position="39"/>
        <end position="41"/>
    </location>
</feature>
<feature type="helix" evidence="6">
    <location>
        <begin position="46"/>
        <end position="66"/>
    </location>
</feature>
<feature type="helix" evidence="6">
    <location>
        <begin position="68"/>
        <end position="73"/>
    </location>
</feature>
<feature type="strand" evidence="6">
    <location>
        <begin position="81"/>
        <end position="83"/>
    </location>
</feature>
<feature type="helix" evidence="6">
    <location>
        <begin position="85"/>
        <end position="95"/>
    </location>
</feature>
<feature type="strand" evidence="6">
    <location>
        <begin position="101"/>
        <end position="107"/>
    </location>
</feature>
<feature type="helix" evidence="6">
    <location>
        <begin position="108"/>
        <end position="110"/>
    </location>
</feature>
<feature type="turn" evidence="6">
    <location>
        <begin position="112"/>
        <end position="114"/>
    </location>
</feature>
<feature type="helix" evidence="6">
    <location>
        <begin position="118"/>
        <end position="136"/>
    </location>
</feature>
<feature type="helix" evidence="6">
    <location>
        <begin position="146"/>
        <end position="150"/>
    </location>
</feature>
<feature type="helix" evidence="6">
    <location>
        <begin position="152"/>
        <end position="159"/>
    </location>
</feature>
<feature type="strand" evidence="6">
    <location>
        <begin position="161"/>
        <end position="166"/>
    </location>
</feature>
<feature type="helix" evidence="6">
    <location>
        <begin position="170"/>
        <end position="182"/>
    </location>
</feature>
<feature type="strand" evidence="6">
    <location>
        <begin position="185"/>
        <end position="191"/>
    </location>
</feature>
<feature type="helix" evidence="6">
    <location>
        <begin position="196"/>
        <end position="204"/>
    </location>
</feature>
<feature type="strand" evidence="6">
    <location>
        <begin position="208"/>
        <end position="214"/>
    </location>
</feature>
<feature type="helix" evidence="6">
    <location>
        <begin position="216"/>
        <end position="228"/>
    </location>
</feature>
<feature type="strand" evidence="6">
    <location>
        <begin position="233"/>
        <end position="235"/>
    </location>
</feature>
<feature type="turn" evidence="6">
    <location>
        <begin position="238"/>
        <end position="240"/>
    </location>
</feature>
<feature type="helix" evidence="6">
    <location>
        <begin position="242"/>
        <end position="249"/>
    </location>
</feature>
<feature type="helix" evidence="6">
    <location>
        <begin position="251"/>
        <end position="262"/>
    </location>
</feature>
<feature type="strand" evidence="6">
    <location>
        <begin position="272"/>
        <end position="277"/>
    </location>
</feature>
<feature type="strand" evidence="6">
    <location>
        <begin position="279"/>
        <end position="281"/>
    </location>
</feature>
<feature type="helix" evidence="6">
    <location>
        <begin position="282"/>
        <end position="295"/>
    </location>
</feature>
<feature type="helix" evidence="6">
    <location>
        <begin position="296"/>
        <end position="298"/>
    </location>
</feature>
<feature type="strand" evidence="6">
    <location>
        <begin position="299"/>
        <end position="306"/>
    </location>
</feature>
<feature type="helix" evidence="6">
    <location>
        <begin position="311"/>
        <end position="318"/>
    </location>
</feature>
<feature type="helix" evidence="6">
    <location>
        <begin position="321"/>
        <end position="323"/>
    </location>
</feature>
<feature type="helix" evidence="6">
    <location>
        <begin position="326"/>
        <end position="329"/>
    </location>
</feature>
<feature type="helix" evidence="6">
    <location>
        <begin position="338"/>
        <end position="340"/>
    </location>
</feature>
<feature type="helix" evidence="6">
    <location>
        <begin position="349"/>
        <end position="353"/>
    </location>
</feature>
<feature type="helix" evidence="6">
    <location>
        <begin position="354"/>
        <end position="356"/>
    </location>
</feature>
<feature type="strand" evidence="6">
    <location>
        <begin position="359"/>
        <end position="363"/>
    </location>
</feature>
<feature type="helix" evidence="6">
    <location>
        <begin position="365"/>
        <end position="379"/>
    </location>
</feature>
<feature type="helix" evidence="6">
    <location>
        <begin position="385"/>
        <end position="392"/>
    </location>
</feature>
<feature type="helix" evidence="6">
    <location>
        <begin position="393"/>
        <end position="399"/>
    </location>
</feature>
<feature type="helix" evidence="6">
    <location>
        <begin position="401"/>
        <end position="407"/>
    </location>
</feature>
<feature type="helix" evidence="6">
    <location>
        <begin position="411"/>
        <end position="415"/>
    </location>
</feature>
<feature type="strand" evidence="6">
    <location>
        <begin position="418"/>
        <end position="423"/>
    </location>
</feature>
<feature type="helix" evidence="6">
    <location>
        <begin position="431"/>
        <end position="440"/>
    </location>
</feature>
<protein>
    <recommendedName>
        <fullName>D-serine dehydratase</fullName>
        <ecNumber>4.3.1.18</ecNumber>
    </recommendedName>
    <alternativeName>
        <fullName>D-serine deaminase</fullName>
        <shortName>DSD</shortName>
    </alternativeName>
</protein>
<organism>
    <name type="scientific">Escherichia coli (strain K12)</name>
    <dbReference type="NCBI Taxonomy" id="83333"/>
    <lineage>
        <taxon>Bacteria</taxon>
        <taxon>Pseudomonadati</taxon>
        <taxon>Pseudomonadota</taxon>
        <taxon>Gammaproteobacteria</taxon>
        <taxon>Enterobacterales</taxon>
        <taxon>Enterobacteriaceae</taxon>
        <taxon>Escherichia</taxon>
    </lineage>
</organism>
<evidence type="ECO:0000269" key="1">
    <source>
    </source>
</evidence>
<evidence type="ECO:0000269" key="2">
    <source>
    </source>
</evidence>
<evidence type="ECO:0000305" key="3"/>
<evidence type="ECO:0007744" key="4">
    <source>
        <dbReference type="PDB" id="3SS7"/>
    </source>
</evidence>
<evidence type="ECO:0007744" key="5">
    <source>
        <dbReference type="PDB" id="3SS9"/>
    </source>
</evidence>
<evidence type="ECO:0007829" key="6">
    <source>
        <dbReference type="PDB" id="3SS7"/>
    </source>
</evidence>